<dbReference type="EC" id="3.6.5.2" evidence="3"/>
<dbReference type="EMBL" id="D01046">
    <property type="protein sequence ID" value="BAA22522.1"/>
    <property type="molecule type" value="mRNA"/>
</dbReference>
<dbReference type="EMBL" id="AF286534">
    <property type="protein sequence ID" value="AAG00542.1"/>
    <property type="molecule type" value="mRNA"/>
</dbReference>
<dbReference type="EMBL" id="BC062041">
    <property type="protein sequence ID" value="AAH62041.1"/>
    <property type="molecule type" value="mRNA"/>
</dbReference>
<dbReference type="RefSeq" id="NP_116006.1">
    <property type="nucleotide sequence ID" value="NM_032617.2"/>
</dbReference>
<dbReference type="SMR" id="O35509"/>
<dbReference type="BioGRID" id="249465">
    <property type="interactions" value="2"/>
</dbReference>
<dbReference type="FunCoup" id="O35509">
    <property type="interactions" value="3771"/>
</dbReference>
<dbReference type="IntAct" id="O35509">
    <property type="interactions" value="3"/>
</dbReference>
<dbReference type="STRING" id="10116.ENSRNOP00000010197"/>
<dbReference type="iPTMnet" id="O35509"/>
<dbReference type="PhosphoSitePlus" id="O35509"/>
<dbReference type="jPOST" id="O35509"/>
<dbReference type="PaxDb" id="10116-ENSRNOP00000010197"/>
<dbReference type="GeneID" id="79434"/>
<dbReference type="KEGG" id="rno:79434"/>
<dbReference type="UCSC" id="RGD:68369">
    <property type="organism name" value="rat"/>
</dbReference>
<dbReference type="AGR" id="RGD:68369"/>
<dbReference type="CTD" id="9230"/>
<dbReference type="RGD" id="68369">
    <property type="gene designation" value="Rab11b"/>
</dbReference>
<dbReference type="VEuPathDB" id="HostDB:ENSRNOG00000007648"/>
<dbReference type="eggNOG" id="KOG0087">
    <property type="taxonomic scope" value="Eukaryota"/>
</dbReference>
<dbReference type="InParanoid" id="O35509"/>
<dbReference type="OrthoDB" id="9073at9989"/>
<dbReference type="PhylomeDB" id="O35509"/>
<dbReference type="TreeFam" id="TF300099"/>
<dbReference type="Reactome" id="R-RNO-8854214">
    <property type="pathway name" value="TBC/RABGAPs"/>
</dbReference>
<dbReference type="Reactome" id="R-RNO-8873719">
    <property type="pathway name" value="RAB geranylgeranylation"/>
</dbReference>
<dbReference type="PRO" id="PR:O35509"/>
<dbReference type="Proteomes" id="UP000002494">
    <property type="component" value="Chromosome 7"/>
</dbReference>
<dbReference type="Bgee" id="ENSRNOG00000007648">
    <property type="expression patterns" value="Expressed in frontal cortex and 19 other cell types or tissues"/>
</dbReference>
<dbReference type="ExpressionAtlas" id="O35509">
    <property type="expression patterns" value="baseline and differential"/>
</dbReference>
<dbReference type="GO" id="GO:0005737">
    <property type="term" value="C:cytoplasm"/>
    <property type="evidence" value="ECO:0000266"/>
    <property type="project" value="RGD"/>
</dbReference>
<dbReference type="GO" id="GO:0031410">
    <property type="term" value="C:cytoplasmic vesicle"/>
    <property type="evidence" value="ECO:0000314"/>
    <property type="project" value="MGI"/>
</dbReference>
<dbReference type="GO" id="GO:0005794">
    <property type="term" value="C:Golgi apparatus"/>
    <property type="evidence" value="ECO:0000318"/>
    <property type="project" value="GO_Central"/>
</dbReference>
<dbReference type="GO" id="GO:0045335">
    <property type="term" value="C:phagocytic vesicle"/>
    <property type="evidence" value="ECO:0000250"/>
    <property type="project" value="UniProtKB"/>
</dbReference>
<dbReference type="GO" id="GO:0030670">
    <property type="term" value="C:phagocytic vesicle membrane"/>
    <property type="evidence" value="ECO:0007669"/>
    <property type="project" value="UniProtKB-SubCell"/>
</dbReference>
<dbReference type="GO" id="GO:0055037">
    <property type="term" value="C:recycling endosome"/>
    <property type="evidence" value="ECO:0000250"/>
    <property type="project" value="UniProtKB"/>
</dbReference>
<dbReference type="GO" id="GO:0055038">
    <property type="term" value="C:recycling endosome membrane"/>
    <property type="evidence" value="ECO:0000266"/>
    <property type="project" value="RGD"/>
</dbReference>
<dbReference type="GO" id="GO:0008021">
    <property type="term" value="C:synaptic vesicle"/>
    <property type="evidence" value="ECO:0000314"/>
    <property type="project" value="UniProtKB"/>
</dbReference>
<dbReference type="GO" id="GO:0030672">
    <property type="term" value="C:synaptic vesicle membrane"/>
    <property type="evidence" value="ECO:0000314"/>
    <property type="project" value="SynGO"/>
</dbReference>
<dbReference type="GO" id="GO:0003925">
    <property type="term" value="F:G protein activity"/>
    <property type="evidence" value="ECO:0007669"/>
    <property type="project" value="UniProtKB-EC"/>
</dbReference>
<dbReference type="GO" id="GO:0019003">
    <property type="term" value="F:GDP binding"/>
    <property type="evidence" value="ECO:0000250"/>
    <property type="project" value="UniProtKB"/>
</dbReference>
<dbReference type="GO" id="GO:0005525">
    <property type="term" value="F:GTP binding"/>
    <property type="evidence" value="ECO:0000250"/>
    <property type="project" value="UniProtKB"/>
</dbReference>
<dbReference type="GO" id="GO:0003924">
    <property type="term" value="F:GTPase activity"/>
    <property type="evidence" value="ECO:0000250"/>
    <property type="project" value="UniProtKB"/>
</dbReference>
<dbReference type="GO" id="GO:0031489">
    <property type="term" value="F:myosin V binding"/>
    <property type="evidence" value="ECO:0000266"/>
    <property type="project" value="RGD"/>
</dbReference>
<dbReference type="GO" id="GO:0150093">
    <property type="term" value="P:amyloid-beta clearance by transcytosis"/>
    <property type="evidence" value="ECO:0000266"/>
    <property type="project" value="RGD"/>
</dbReference>
<dbReference type="GO" id="GO:0071468">
    <property type="term" value="P:cellular response to acidic pH"/>
    <property type="evidence" value="ECO:0000250"/>
    <property type="project" value="UniProtKB"/>
</dbReference>
<dbReference type="GO" id="GO:0045054">
    <property type="term" value="P:constitutive secretory pathway"/>
    <property type="evidence" value="ECO:0000315"/>
    <property type="project" value="UniProtKB"/>
</dbReference>
<dbReference type="GO" id="GO:0032456">
    <property type="term" value="P:endocytic recycling"/>
    <property type="evidence" value="ECO:0000250"/>
    <property type="project" value="UniProtKB"/>
</dbReference>
<dbReference type="GO" id="GO:0090150">
    <property type="term" value="P:establishment of protein localization to membrane"/>
    <property type="evidence" value="ECO:0000266"/>
    <property type="project" value="RGD"/>
</dbReference>
<dbReference type="GO" id="GO:0035773">
    <property type="term" value="P:insulin secretion involved in cellular response to glucose stimulus"/>
    <property type="evidence" value="ECO:0000250"/>
    <property type="project" value="UniProtKB"/>
</dbReference>
<dbReference type="GO" id="GO:0032402">
    <property type="term" value="P:melanosome transport"/>
    <property type="evidence" value="ECO:0000250"/>
    <property type="project" value="UniProtKB"/>
</dbReference>
<dbReference type="GO" id="GO:0001881">
    <property type="term" value="P:receptor recycling"/>
    <property type="evidence" value="ECO:0000250"/>
    <property type="project" value="UniProtKB"/>
</dbReference>
<dbReference type="GO" id="GO:0045055">
    <property type="term" value="P:regulated exocytosis"/>
    <property type="evidence" value="ECO:0000315"/>
    <property type="project" value="UniProtKB"/>
</dbReference>
<dbReference type="GO" id="GO:2001135">
    <property type="term" value="P:regulation of endocytic recycling"/>
    <property type="evidence" value="ECO:0000250"/>
    <property type="project" value="UniProtKB"/>
</dbReference>
<dbReference type="GO" id="GO:0044070">
    <property type="term" value="P:regulation of monoatomic anion transport"/>
    <property type="evidence" value="ECO:0000250"/>
    <property type="project" value="UniProtKB"/>
</dbReference>
<dbReference type="GO" id="GO:0099161">
    <property type="term" value="P:regulation of presynaptic dense core granule exocytosis"/>
    <property type="evidence" value="ECO:0000314"/>
    <property type="project" value="SynGO"/>
</dbReference>
<dbReference type="GO" id="GO:2000008">
    <property type="term" value="P:regulation of protein localization to cell surface"/>
    <property type="evidence" value="ECO:0000250"/>
    <property type="project" value="UniProtKB"/>
</dbReference>
<dbReference type="GO" id="GO:0033572">
    <property type="term" value="P:transferrin transport"/>
    <property type="evidence" value="ECO:0000250"/>
    <property type="project" value="UniProtKB"/>
</dbReference>
<dbReference type="CDD" id="cd01868">
    <property type="entry name" value="Rab11_like"/>
    <property type="match status" value="1"/>
</dbReference>
<dbReference type="FunFam" id="3.40.50.300:FF:000085">
    <property type="entry name" value="Putative ras-related protein rab-11a"/>
    <property type="match status" value="1"/>
</dbReference>
<dbReference type="Gene3D" id="3.40.50.300">
    <property type="entry name" value="P-loop containing nucleotide triphosphate hydrolases"/>
    <property type="match status" value="1"/>
</dbReference>
<dbReference type="InterPro" id="IPR027417">
    <property type="entry name" value="P-loop_NTPase"/>
</dbReference>
<dbReference type="InterPro" id="IPR050209">
    <property type="entry name" value="Rab_GTPases_membrane_traffic"/>
</dbReference>
<dbReference type="InterPro" id="IPR005225">
    <property type="entry name" value="Small_GTP-bd"/>
</dbReference>
<dbReference type="InterPro" id="IPR001806">
    <property type="entry name" value="Small_GTPase"/>
</dbReference>
<dbReference type="NCBIfam" id="TIGR00231">
    <property type="entry name" value="small_GTP"/>
    <property type="match status" value="1"/>
</dbReference>
<dbReference type="PANTHER" id="PTHR47979">
    <property type="entry name" value="DRAB11-RELATED"/>
    <property type="match status" value="1"/>
</dbReference>
<dbReference type="Pfam" id="PF00071">
    <property type="entry name" value="Ras"/>
    <property type="match status" value="1"/>
</dbReference>
<dbReference type="PRINTS" id="PR00449">
    <property type="entry name" value="RASTRNSFRMNG"/>
</dbReference>
<dbReference type="SMART" id="SM00175">
    <property type="entry name" value="RAB"/>
    <property type="match status" value="1"/>
</dbReference>
<dbReference type="SMART" id="SM00176">
    <property type="entry name" value="RAN"/>
    <property type="match status" value="1"/>
</dbReference>
<dbReference type="SMART" id="SM00173">
    <property type="entry name" value="RAS"/>
    <property type="match status" value="1"/>
</dbReference>
<dbReference type="SMART" id="SM00174">
    <property type="entry name" value="RHO"/>
    <property type="match status" value="1"/>
</dbReference>
<dbReference type="SUPFAM" id="SSF52540">
    <property type="entry name" value="P-loop containing nucleoside triphosphate hydrolases"/>
    <property type="match status" value="1"/>
</dbReference>
<dbReference type="PROSITE" id="PS51419">
    <property type="entry name" value="RAB"/>
    <property type="match status" value="1"/>
</dbReference>
<reference key="1">
    <citation type="submission" date="1991-05" db="EMBL/GenBank/DDBJ databases">
        <title>A novel YPT1/SEC4 related gene from rat brain.</title>
        <authorList>
            <person name="Sakurada K."/>
            <person name="Aisaka K."/>
            <person name="Ito S."/>
            <person name="Takeyama Y."/>
            <person name="Hori Y."/>
            <person name="Takai Y."/>
        </authorList>
    </citation>
    <scope>NUCLEOTIDE SEQUENCE [MRNA]</scope>
    <source>
        <strain>Sprague-Dawley</strain>
        <tissue>Brain</tissue>
    </source>
</reference>
<reference key="2">
    <citation type="submission" date="2000-07" db="EMBL/GenBank/DDBJ databases">
        <authorList>
            <person name="Zhao H."/>
            <person name="Gao L."/>
            <person name="Vaananen K.H."/>
        </authorList>
    </citation>
    <scope>NUCLEOTIDE SEQUENCE [MRNA]</scope>
    <source>
        <strain>Sprague-Dawley</strain>
        <tissue>Bone</tissue>
    </source>
</reference>
<reference key="3">
    <citation type="journal article" date="2004" name="Genome Res.">
        <title>The status, quality, and expansion of the NIH full-length cDNA project: the Mammalian Gene Collection (MGC).</title>
        <authorList>
            <consortium name="The MGC Project Team"/>
        </authorList>
    </citation>
    <scope>NUCLEOTIDE SEQUENCE [LARGE SCALE MRNA]</scope>
    <source>
        <tissue>Prostate</tissue>
    </source>
</reference>
<reference key="4">
    <citation type="journal article" date="2003" name="J. Neurosci.">
        <title>Divergent functions of neuronal Rab11b in Ca2+-regulated versus constitutive exocytosis.</title>
        <authorList>
            <person name="Khvotchev M.V."/>
            <person name="Ren M."/>
            <person name="Takamori S."/>
            <person name="Jahn R."/>
            <person name="Suedhof T.C."/>
        </authorList>
    </citation>
    <scope>FUNCTION IN EXOCYTOSIS</scope>
    <scope>SUBCELLULAR LOCATION</scope>
</reference>
<proteinExistence type="evidence at protein level"/>
<organism>
    <name type="scientific">Rattus norvegicus</name>
    <name type="common">Rat</name>
    <dbReference type="NCBI Taxonomy" id="10116"/>
    <lineage>
        <taxon>Eukaryota</taxon>
        <taxon>Metazoa</taxon>
        <taxon>Chordata</taxon>
        <taxon>Craniata</taxon>
        <taxon>Vertebrata</taxon>
        <taxon>Euteleostomi</taxon>
        <taxon>Mammalia</taxon>
        <taxon>Eutheria</taxon>
        <taxon>Euarchontoglires</taxon>
        <taxon>Glires</taxon>
        <taxon>Rodentia</taxon>
        <taxon>Myomorpha</taxon>
        <taxon>Muroidea</taxon>
        <taxon>Muridae</taxon>
        <taxon>Murinae</taxon>
        <taxon>Rattus</taxon>
    </lineage>
</organism>
<accession>O35509</accession>
<accession>Q9ET14</accession>
<sequence length="218" mass="24489">MGTRDDEYDYLFKVVLIGDSGVGKSNLLSRFTRNEFNLESKSTIGVEFATRSIQVDGKTIKAQIWDTAGQERYRAITSAYYRGAVGALLVYDIAKHLTYENVERWLKELRDHADSNIVIMLVGNKSDLRHLRAVPTDEARAFAEKNNLSFIETSALDSTNVEEAFKNILTEIYRIVSQKQIADRAAHDESPGNNVVDISVPPTTDGQKPNKLQCCQNL</sequence>
<name>RB11B_RAT</name>
<feature type="initiator methionine" description="Removed" evidence="3">
    <location>
        <position position="1"/>
    </location>
</feature>
<feature type="chain" id="PRO_0000121160" description="Ras-related protein Rab-11B">
    <location>
        <begin position="2"/>
        <end position="215"/>
    </location>
</feature>
<feature type="propeptide" id="PRO_0000370817" description="Removed in mature form" evidence="2">
    <location>
        <begin position="216"/>
        <end position="218"/>
    </location>
</feature>
<feature type="region of interest" description="Disordered" evidence="4">
    <location>
        <begin position="184"/>
        <end position="218"/>
    </location>
</feature>
<feature type="short sequence motif" description="Switch 1" evidence="3">
    <location>
        <begin position="36"/>
        <end position="47"/>
    </location>
</feature>
<feature type="short sequence motif" description="Switch 2" evidence="3">
    <location>
        <begin position="67"/>
        <end position="86"/>
    </location>
</feature>
<feature type="binding site" evidence="3">
    <location>
        <position position="20"/>
    </location>
    <ligand>
        <name>GTP</name>
        <dbReference type="ChEBI" id="CHEBI:37565"/>
    </ligand>
</feature>
<feature type="binding site" evidence="3">
    <location>
        <position position="21"/>
    </location>
    <ligand>
        <name>GTP</name>
        <dbReference type="ChEBI" id="CHEBI:37565"/>
    </ligand>
</feature>
<feature type="binding site" evidence="3">
    <location>
        <position position="23"/>
    </location>
    <ligand>
        <name>GTP</name>
        <dbReference type="ChEBI" id="CHEBI:37565"/>
    </ligand>
</feature>
<feature type="binding site" evidence="3">
    <location>
        <position position="24"/>
    </location>
    <ligand>
        <name>GTP</name>
        <dbReference type="ChEBI" id="CHEBI:37565"/>
    </ligand>
</feature>
<feature type="binding site" evidence="3">
    <location>
        <position position="25"/>
    </location>
    <ligand>
        <name>GTP</name>
        <dbReference type="ChEBI" id="CHEBI:37565"/>
    </ligand>
</feature>
<feature type="binding site" evidence="3">
    <location>
        <position position="25"/>
    </location>
    <ligand>
        <name>Mg(2+)</name>
        <dbReference type="ChEBI" id="CHEBI:18420"/>
    </ligand>
</feature>
<feature type="binding site" evidence="3">
    <location>
        <position position="26"/>
    </location>
    <ligand>
        <name>GTP</name>
        <dbReference type="ChEBI" id="CHEBI:37565"/>
    </ligand>
</feature>
<feature type="binding site" evidence="3">
    <location>
        <position position="37"/>
    </location>
    <ligand>
        <name>GTP</name>
        <dbReference type="ChEBI" id="CHEBI:37565"/>
    </ligand>
</feature>
<feature type="binding site" evidence="3">
    <location>
        <position position="38"/>
    </location>
    <ligand>
        <name>GTP</name>
        <dbReference type="ChEBI" id="CHEBI:37565"/>
    </ligand>
</feature>
<feature type="binding site" evidence="3">
    <location>
        <position position="40"/>
    </location>
    <ligand>
        <name>GTP</name>
        <dbReference type="ChEBI" id="CHEBI:37565"/>
    </ligand>
</feature>
<feature type="binding site" evidence="3">
    <location>
        <position position="42"/>
    </location>
    <ligand>
        <name>GTP</name>
        <dbReference type="ChEBI" id="CHEBI:37565"/>
    </ligand>
</feature>
<feature type="binding site" evidence="3">
    <location>
        <position position="43"/>
    </location>
    <ligand>
        <name>GTP</name>
        <dbReference type="ChEBI" id="CHEBI:37565"/>
    </ligand>
</feature>
<feature type="binding site" evidence="3">
    <location>
        <position position="43"/>
    </location>
    <ligand>
        <name>Mg(2+)</name>
        <dbReference type="ChEBI" id="CHEBI:18420"/>
    </ligand>
</feature>
<feature type="binding site" evidence="3">
    <location>
        <position position="66"/>
    </location>
    <ligand>
        <name>Mg(2+)</name>
        <dbReference type="ChEBI" id="CHEBI:18420"/>
    </ligand>
</feature>
<feature type="binding site" evidence="3">
    <location>
        <position position="69"/>
    </location>
    <ligand>
        <name>GTP</name>
        <dbReference type="ChEBI" id="CHEBI:37565"/>
    </ligand>
</feature>
<feature type="binding site" evidence="3">
    <location>
        <position position="124"/>
    </location>
    <ligand>
        <name>GTP</name>
        <dbReference type="ChEBI" id="CHEBI:37565"/>
    </ligand>
</feature>
<feature type="binding site" evidence="3">
    <location>
        <position position="125"/>
    </location>
    <ligand>
        <name>GTP</name>
        <dbReference type="ChEBI" id="CHEBI:37565"/>
    </ligand>
</feature>
<feature type="binding site" evidence="3">
    <location>
        <position position="127"/>
    </location>
    <ligand>
        <name>GTP</name>
        <dbReference type="ChEBI" id="CHEBI:37565"/>
    </ligand>
</feature>
<feature type="binding site" evidence="3">
    <location>
        <position position="155"/>
    </location>
    <ligand>
        <name>GTP</name>
        <dbReference type="ChEBI" id="CHEBI:37565"/>
    </ligand>
</feature>
<feature type="binding site" evidence="3">
    <location>
        <position position="156"/>
    </location>
    <ligand>
        <name>GTP</name>
        <dbReference type="ChEBI" id="CHEBI:37565"/>
    </ligand>
</feature>
<feature type="modified residue" description="N-acetylglycine" evidence="3">
    <location>
        <position position="2"/>
    </location>
</feature>
<feature type="modified residue" description="Citrulline" evidence="1">
    <location>
        <position position="4"/>
    </location>
</feature>
<feature type="modified residue" description="Cysteine methyl ester" evidence="2">
    <location>
        <position position="215"/>
    </location>
</feature>
<feature type="lipid moiety-binding region" description="S-geranylgeranyl cysteine" evidence="3">
    <location>
        <position position="214"/>
    </location>
</feature>
<feature type="lipid moiety-binding region" description="S-geranylgeranyl cysteine" evidence="3">
    <location>
        <position position="215"/>
    </location>
</feature>
<feature type="sequence conflict" description="In Ref. 1; BAA22522." evidence="6" ref="1">
    <original>M</original>
    <variation>L</variation>
    <location>
        <position position="120"/>
    </location>
</feature>
<feature type="sequence conflict" description="In Ref. 1; BAA22522." evidence="6" ref="1">
    <original>PTD</original>
    <variation>CPLT</variation>
    <location>
        <begin position="135"/>
        <end position="137"/>
    </location>
</feature>
<feature type="sequence conflict" description="In Ref. 1; BAA22522." evidence="6" ref="1">
    <original>KNN</original>
    <variation>RH</variation>
    <location>
        <begin position="145"/>
        <end position="147"/>
    </location>
</feature>
<keyword id="KW-0007">Acetylation</keyword>
<keyword id="KW-0164">Citrullination</keyword>
<keyword id="KW-0968">Cytoplasmic vesicle</keyword>
<keyword id="KW-0967">Endosome</keyword>
<keyword id="KW-0342">GTP-binding</keyword>
<keyword id="KW-0378">Hydrolase</keyword>
<keyword id="KW-0449">Lipoprotein</keyword>
<keyword id="KW-0460">Magnesium</keyword>
<keyword id="KW-0472">Membrane</keyword>
<keyword id="KW-0479">Metal-binding</keyword>
<keyword id="KW-0488">Methylation</keyword>
<keyword id="KW-0547">Nucleotide-binding</keyword>
<keyword id="KW-0636">Prenylation</keyword>
<keyword id="KW-0653">Protein transport</keyword>
<keyword id="KW-1185">Reference proteome</keyword>
<keyword id="KW-0770">Synapse</keyword>
<keyword id="KW-0813">Transport</keyword>
<gene>
    <name evidence="8" type="primary">Rab11b</name>
</gene>
<protein>
    <recommendedName>
        <fullName>Ras-related protein Rab-11B</fullName>
        <ecNumber evidence="3">3.6.5.2</ecNumber>
    </recommendedName>
</protein>
<evidence type="ECO:0000250" key="1">
    <source>
        <dbReference type="UniProtKB" id="P46638"/>
    </source>
</evidence>
<evidence type="ECO:0000250" key="2">
    <source>
        <dbReference type="UniProtKB" id="P51157"/>
    </source>
</evidence>
<evidence type="ECO:0000250" key="3">
    <source>
        <dbReference type="UniProtKB" id="Q15907"/>
    </source>
</evidence>
<evidence type="ECO:0000256" key="4">
    <source>
        <dbReference type="SAM" id="MobiDB-lite"/>
    </source>
</evidence>
<evidence type="ECO:0000269" key="5">
    <source>
    </source>
</evidence>
<evidence type="ECO:0000305" key="6"/>
<evidence type="ECO:0000305" key="7">
    <source>
    </source>
</evidence>
<evidence type="ECO:0000312" key="8">
    <source>
        <dbReference type="RGD" id="68369"/>
    </source>
</evidence>
<comment type="function">
    <text evidence="3 5">The small GTPases Rab are key regulators of intracellular membrane trafficking, from the formation of transport vesicles to their fusion with membranes. Rabs cycle between an inactive GDP-bound form and an active GTP-bound form that is able to recruit to membranes different set of downstream effectors directly responsible for vesicle formation, movement, tethering and fusion. The small Rab GTPase RAB11B plays a role in endocytic recycling, regulating apical recycling of several transmembrane proteins including cystic fibrosis transmembrane conductance regulator/CFTR, epithelial sodium channel/ENaC, potassium voltage-gated channel, and voltage-dependent L-type calcium channel. May also regulate constitutive and regulated secretion, like insulin granule exocytosis. Required for melanosome transport and release from melanocytes. Also regulates V-ATPase intracellular transport in response to extracellular acidosis. Promotes Rabin8/RAB3IP preciliary vesicular trafficking to mother centriole by forming a ciliary targeting complex containing Rab11, ASAP1, Rabin8/RAB3IP, RAB11FIP3 and ARF4, thereby regulating ciliogenesis initiation. On the contrary, upon LPAR1 receptor signaling pathway activation, interaction with phosphorylated WDR44 prevents Rab11-RAB3IP-RAB11FIP3 complex formation and cilia growth (By similarity).</text>
</comment>
<comment type="catalytic activity">
    <reaction evidence="3">
        <text>GTP + H2O = GDP + phosphate + H(+)</text>
        <dbReference type="Rhea" id="RHEA:19669"/>
        <dbReference type="ChEBI" id="CHEBI:15377"/>
        <dbReference type="ChEBI" id="CHEBI:15378"/>
        <dbReference type="ChEBI" id="CHEBI:37565"/>
        <dbReference type="ChEBI" id="CHEBI:43474"/>
        <dbReference type="ChEBI" id="CHEBI:58189"/>
        <dbReference type="EC" id="3.6.5.2"/>
    </reaction>
    <physiologicalReaction direction="left-to-right" evidence="3">
        <dbReference type="Rhea" id="RHEA:19670"/>
    </physiologicalReaction>
</comment>
<comment type="cofactor">
    <cofactor evidence="3">
        <name>Mg(2+)</name>
        <dbReference type="ChEBI" id="CHEBI:18420"/>
    </cofactor>
</comment>
<comment type="activity regulation">
    <text evidence="6">Regulated by guanine nucleotide exchange factors (GEFs) which promote the exchange of bound GDP for free GTP. Regulated by GTPase activating proteins (GAPs) which increase the GTP hydrolysis activity. Inhibited by GDP dissociation inhibitors (GDIs) which prevent Rab-GDP dissociation.</text>
</comment>
<comment type="subunit">
    <text evidence="1 3">Interacts with KCNMA1 (By similarity). Interacts with RAB11FIP1, RAB11FIP2, RAB11FIP3 and RAB11FIP4 (By similarity). May interact with TBC1D14 (By similarity). Interacts with ATP6V1E (By similarity)1. Interacts with PI4KB (By similarity). Interacts with RELCH (By similarity). Interacts (in GTP-bound form) with TBC1D8B (via domain Rab-GAP TBC) (By similarity). Forms a complex containing RAB11B, ASAP1, Rabin8/RAB3IP, RAP11FIP3 and ARF4. Interacts with WDR44 (By similarity).</text>
</comment>
<comment type="subcellular location">
    <subcellularLocation>
        <location evidence="1">Recycling endosome membrane</location>
        <topology evidence="1">Lipid-anchor</topology>
        <orientation evidence="1">Cytoplasmic side</orientation>
    </subcellularLocation>
    <subcellularLocation>
        <location evidence="7">Cytoplasmic vesicle</location>
        <location evidence="7">Secretory vesicle</location>
        <location evidence="7">Synaptic vesicle membrane</location>
        <topology evidence="7">Lipid-anchor</topology>
        <orientation evidence="7">Cytoplasmic side</orientation>
    </subcellularLocation>
    <subcellularLocation>
        <location evidence="3">Cytoplasmic vesicle</location>
        <location evidence="3">Phagosome membrane</location>
        <topology evidence="3">Lipid-anchor</topology>
        <orientation evidence="3">Cytoplasmic side</orientation>
    </subcellularLocation>
    <subcellularLocation>
        <location evidence="3">Cytoplasmic vesicle</location>
    </subcellularLocation>
    <text evidence="3">Colocalizes with RAB11AFIP1 on punctate vesicles.</text>
</comment>
<comment type="domain">
    <text evidence="3">Switch 1, switch 2 and the interswitch regions are characteristic of Rab GTPases and mediate the interactions with Rab downstream effectors. The switch regions undergo conformational changes upon nucleotide binding which drives interaction with specific sets of effector proteins, with most effectors only binding to GTP-bound Rab.</text>
</comment>
<comment type="PTM">
    <text evidence="1">Citrullinated by PADI4.</text>
</comment>
<comment type="similarity">
    <text evidence="6">Belongs to the small GTPase superfamily. Rab family.</text>
</comment>